<accession>Q09WY7</accession>
<comment type="function">
    <text evidence="1">Component of the cytochrome b6-f complex, which mediates electron transfer between photosystem II (PSII) and photosystem I (PSI), cyclic electron flow around PSI, and state transitions.</text>
</comment>
<comment type="cofactor">
    <cofactor evidence="1">
        <name>heme b</name>
        <dbReference type="ChEBI" id="CHEBI:60344"/>
    </cofactor>
    <text evidence="1">Binds 2 heme b groups non-covalently with two histidine residues as axial ligands.</text>
</comment>
<comment type="cofactor">
    <cofactor evidence="1">
        <name>heme c</name>
        <dbReference type="ChEBI" id="CHEBI:61717"/>
    </cofactor>
    <text evidence="1">Binds one heme group covalently by a single cysteine link with no axial amino acid ligand. This heme was named heme ci.</text>
</comment>
<comment type="subunit">
    <text evidence="1">The 4 large subunits of the cytochrome b6-f complex are cytochrome b6, subunit IV (17 kDa polypeptide, PetD), cytochrome f and the Rieske protein, while the 4 small subunits are PetG, PetL, PetM and PetN. The complex functions as a dimer.</text>
</comment>
<comment type="subcellular location">
    <subcellularLocation>
        <location evidence="1">Plastid</location>
        <location evidence="1">Chloroplast thylakoid membrane</location>
        <topology evidence="1">Multi-pass membrane protein</topology>
    </subcellularLocation>
</comment>
<comment type="miscellaneous">
    <text evidence="1">Heme 1 (or BH or b566) is high-potential and absorbs at about 566 nm, and heme 2 (or BL or b562) is low-potential and absorbs at about 562 nm.</text>
</comment>
<comment type="similarity">
    <text evidence="1">Belongs to the cytochrome b family. PetB subfamily.</text>
</comment>
<reference key="1">
    <citation type="submission" date="2005-09" db="EMBL/GenBank/DDBJ databases">
        <title>The chloroplast genome of mulberry: structural features and comparative analysis.</title>
        <authorList>
            <person name="Ravi V."/>
            <person name="Khurana J.P."/>
            <person name="Tyagi A.K."/>
            <person name="Khurana P."/>
        </authorList>
    </citation>
    <scope>NUCLEOTIDE SEQUENCE [LARGE SCALE GENOMIC DNA]</scope>
    <source>
        <strain>cv. K2</strain>
    </source>
</reference>
<feature type="chain" id="PRO_0000275323" description="Cytochrome b6">
    <location>
        <begin position="1"/>
        <end position="215"/>
    </location>
</feature>
<feature type="transmembrane region" description="Helical" evidence="1">
    <location>
        <begin position="32"/>
        <end position="52"/>
    </location>
</feature>
<feature type="transmembrane region" description="Helical" evidence="1">
    <location>
        <begin position="90"/>
        <end position="110"/>
    </location>
</feature>
<feature type="transmembrane region" description="Helical" evidence="1">
    <location>
        <begin position="116"/>
        <end position="136"/>
    </location>
</feature>
<feature type="transmembrane region" description="Helical" evidence="1">
    <location>
        <begin position="186"/>
        <end position="206"/>
    </location>
</feature>
<feature type="binding site" description="covalent" evidence="1">
    <location>
        <position position="35"/>
    </location>
    <ligand>
        <name>heme c</name>
        <dbReference type="ChEBI" id="CHEBI:61717"/>
    </ligand>
</feature>
<feature type="binding site" description="axial binding residue" evidence="1">
    <location>
        <position position="86"/>
    </location>
    <ligand>
        <name>heme b</name>
        <dbReference type="ChEBI" id="CHEBI:60344"/>
        <label>2</label>
    </ligand>
    <ligandPart>
        <name>Fe</name>
        <dbReference type="ChEBI" id="CHEBI:18248"/>
    </ligandPart>
</feature>
<feature type="binding site" description="axial binding residue" evidence="1">
    <location>
        <position position="100"/>
    </location>
    <ligand>
        <name>heme b</name>
        <dbReference type="ChEBI" id="CHEBI:60344"/>
        <label>1</label>
    </ligand>
    <ligandPart>
        <name>Fe</name>
        <dbReference type="ChEBI" id="CHEBI:18248"/>
    </ligandPart>
</feature>
<feature type="binding site" description="axial binding residue" evidence="1">
    <location>
        <position position="187"/>
    </location>
    <ligand>
        <name>heme b</name>
        <dbReference type="ChEBI" id="CHEBI:60344"/>
        <label>2</label>
    </ligand>
    <ligandPart>
        <name>Fe</name>
        <dbReference type="ChEBI" id="CHEBI:18248"/>
    </ligandPart>
</feature>
<feature type="binding site" description="axial binding residue" evidence="1">
    <location>
        <position position="202"/>
    </location>
    <ligand>
        <name>heme b</name>
        <dbReference type="ChEBI" id="CHEBI:60344"/>
        <label>1</label>
    </ligand>
    <ligandPart>
        <name>Fe</name>
        <dbReference type="ChEBI" id="CHEBI:18248"/>
    </ligandPart>
</feature>
<protein>
    <recommendedName>
        <fullName evidence="1">Cytochrome b6</fullName>
    </recommendedName>
</protein>
<name>CYB6_MORIN</name>
<sequence>MSKIYDWFEERLEIQAIADDITSKYVPPHVNIFYCLGGITLTCFLVQVATGFAMTFYYRPTVTEAFASVQYIMTETNFGWLIRSVHRWSASMMVLMMILHVFRVYLTGGFKKPRELTWVTGVVLAVLTASFGVTGYSLPWDQIGYWAVKIVTGVPEAIPVIGSPLVELLRGSASVGQSTLTRFYSLHTFVLPLLTAVFMLMHFLMIRKQGISGPL</sequence>
<evidence type="ECO:0000255" key="1">
    <source>
        <dbReference type="HAMAP-Rule" id="MF_00633"/>
    </source>
</evidence>
<organism>
    <name type="scientific">Morus indica</name>
    <name type="common">Mulberry</name>
    <dbReference type="NCBI Taxonomy" id="248361"/>
    <lineage>
        <taxon>Eukaryota</taxon>
        <taxon>Viridiplantae</taxon>
        <taxon>Streptophyta</taxon>
        <taxon>Embryophyta</taxon>
        <taxon>Tracheophyta</taxon>
        <taxon>Spermatophyta</taxon>
        <taxon>Magnoliopsida</taxon>
        <taxon>eudicotyledons</taxon>
        <taxon>Gunneridae</taxon>
        <taxon>Pentapetalae</taxon>
        <taxon>rosids</taxon>
        <taxon>fabids</taxon>
        <taxon>Rosales</taxon>
        <taxon>Moraceae</taxon>
        <taxon>Moreae</taxon>
        <taxon>Morus</taxon>
    </lineage>
</organism>
<geneLocation type="chloroplast"/>
<gene>
    <name evidence="1" type="primary">petB</name>
    <name type="ordered locus">MoinCp051</name>
</gene>
<keyword id="KW-0150">Chloroplast</keyword>
<keyword id="KW-0249">Electron transport</keyword>
<keyword id="KW-0349">Heme</keyword>
<keyword id="KW-0408">Iron</keyword>
<keyword id="KW-0472">Membrane</keyword>
<keyword id="KW-0479">Metal-binding</keyword>
<keyword id="KW-0602">Photosynthesis</keyword>
<keyword id="KW-0934">Plastid</keyword>
<keyword id="KW-0793">Thylakoid</keyword>
<keyword id="KW-0812">Transmembrane</keyword>
<keyword id="KW-1133">Transmembrane helix</keyword>
<keyword id="KW-0813">Transport</keyword>
<dbReference type="EMBL" id="DQ226511">
    <property type="protein sequence ID" value="ABB20987.1"/>
    <property type="molecule type" value="Genomic_DNA"/>
</dbReference>
<dbReference type="RefSeq" id="YP_762291.1">
    <property type="nucleotide sequence ID" value="NC_008359.1"/>
</dbReference>
<dbReference type="SMR" id="Q09WY7"/>
<dbReference type="GeneID" id="4290627"/>
<dbReference type="GO" id="GO:0009535">
    <property type="term" value="C:chloroplast thylakoid membrane"/>
    <property type="evidence" value="ECO:0007669"/>
    <property type="project" value="UniProtKB-SubCell"/>
</dbReference>
<dbReference type="GO" id="GO:0045158">
    <property type="term" value="F:electron transporter, transferring electrons within cytochrome b6/f complex of photosystem II activity"/>
    <property type="evidence" value="ECO:0007669"/>
    <property type="project" value="UniProtKB-UniRule"/>
</dbReference>
<dbReference type="GO" id="GO:0046872">
    <property type="term" value="F:metal ion binding"/>
    <property type="evidence" value="ECO:0007669"/>
    <property type="project" value="UniProtKB-KW"/>
</dbReference>
<dbReference type="GO" id="GO:0016491">
    <property type="term" value="F:oxidoreductase activity"/>
    <property type="evidence" value="ECO:0007669"/>
    <property type="project" value="InterPro"/>
</dbReference>
<dbReference type="GO" id="GO:0015979">
    <property type="term" value="P:photosynthesis"/>
    <property type="evidence" value="ECO:0007669"/>
    <property type="project" value="UniProtKB-UniRule"/>
</dbReference>
<dbReference type="GO" id="GO:0022904">
    <property type="term" value="P:respiratory electron transport chain"/>
    <property type="evidence" value="ECO:0007669"/>
    <property type="project" value="InterPro"/>
</dbReference>
<dbReference type="CDD" id="cd00284">
    <property type="entry name" value="Cytochrome_b_N"/>
    <property type="match status" value="1"/>
</dbReference>
<dbReference type="FunFam" id="1.20.810.10:FF:000001">
    <property type="entry name" value="Cytochrome b6"/>
    <property type="match status" value="1"/>
</dbReference>
<dbReference type="Gene3D" id="1.20.810.10">
    <property type="entry name" value="Cytochrome Bc1 Complex, Chain C"/>
    <property type="match status" value="1"/>
</dbReference>
<dbReference type="HAMAP" id="MF_00633">
    <property type="entry name" value="Cytb6_f_cytb6"/>
    <property type="match status" value="1"/>
</dbReference>
<dbReference type="InterPro" id="IPR005797">
    <property type="entry name" value="Cyt_b/b6_N"/>
</dbReference>
<dbReference type="InterPro" id="IPR023530">
    <property type="entry name" value="Cyt_B6_PetB"/>
</dbReference>
<dbReference type="InterPro" id="IPR027387">
    <property type="entry name" value="Cytb/b6-like_sf"/>
</dbReference>
<dbReference type="InterPro" id="IPR048259">
    <property type="entry name" value="Cytochrome_b_N_euk/bac"/>
</dbReference>
<dbReference type="InterPro" id="IPR016174">
    <property type="entry name" value="Di-haem_cyt_TM"/>
</dbReference>
<dbReference type="NCBIfam" id="NF002990">
    <property type="entry name" value="PRK03735.1"/>
    <property type="match status" value="1"/>
</dbReference>
<dbReference type="PANTHER" id="PTHR19271">
    <property type="entry name" value="CYTOCHROME B"/>
    <property type="match status" value="1"/>
</dbReference>
<dbReference type="PANTHER" id="PTHR19271:SF16">
    <property type="entry name" value="CYTOCHROME B"/>
    <property type="match status" value="1"/>
</dbReference>
<dbReference type="Pfam" id="PF00033">
    <property type="entry name" value="Cytochrome_B"/>
    <property type="match status" value="1"/>
</dbReference>
<dbReference type="PIRSF" id="PIRSF000032">
    <property type="entry name" value="Cytochrome_b6"/>
    <property type="match status" value="1"/>
</dbReference>
<dbReference type="SUPFAM" id="SSF81342">
    <property type="entry name" value="Transmembrane di-heme cytochromes"/>
    <property type="match status" value="1"/>
</dbReference>
<dbReference type="PROSITE" id="PS51002">
    <property type="entry name" value="CYTB_NTER"/>
    <property type="match status" value="1"/>
</dbReference>
<proteinExistence type="inferred from homology"/>